<evidence type="ECO:0000255" key="1">
    <source>
        <dbReference type="HAMAP-Rule" id="MF_01442"/>
    </source>
</evidence>
<evidence type="ECO:0000269" key="2">
    <source>
    </source>
</evidence>
<evidence type="ECO:0000269" key="3">
    <source>
    </source>
</evidence>
<evidence type="ECO:0000303" key="4">
    <source>
    </source>
</evidence>
<evidence type="ECO:0000303" key="5">
    <source>
    </source>
</evidence>
<evidence type="ECO:0000303" key="6">
    <source>
    </source>
</evidence>
<evidence type="ECO:0000303" key="7">
    <source>
    </source>
</evidence>
<evidence type="ECO:0000305" key="8"/>
<evidence type="ECO:0000305" key="9">
    <source>
    </source>
</evidence>
<reference key="1">
    <citation type="journal article" date="1993" name="Mol. Microbiol.">
        <title>Bacillus subtilis genome project: cloning and sequencing of the 97 kb region from 325 degrees to 333 degrees.</title>
        <authorList>
            <person name="Glaser P."/>
            <person name="Kunst F."/>
            <person name="Arnaud M."/>
            <person name="Coudart M.P."/>
            <person name="Gonzales W."/>
            <person name="Hullo M.-F."/>
            <person name="Ionescu M."/>
            <person name="Lubochinsky B."/>
            <person name="Marcelino L."/>
            <person name="Moszer I."/>
            <person name="Presecan E."/>
            <person name="Santana M."/>
            <person name="Schneider E."/>
            <person name="Schweizer J."/>
            <person name="Vertes A."/>
            <person name="Rapoport G."/>
            <person name="Danchin A."/>
        </authorList>
    </citation>
    <scope>NUCLEOTIDE SEQUENCE [GENOMIC DNA]</scope>
    <source>
        <strain>168</strain>
    </source>
</reference>
<reference key="2">
    <citation type="journal article" date="1997" name="Nature">
        <title>The complete genome sequence of the Gram-positive bacterium Bacillus subtilis.</title>
        <authorList>
            <person name="Kunst F."/>
            <person name="Ogasawara N."/>
            <person name="Moszer I."/>
            <person name="Albertini A.M."/>
            <person name="Alloni G."/>
            <person name="Azevedo V."/>
            <person name="Bertero M.G."/>
            <person name="Bessieres P."/>
            <person name="Bolotin A."/>
            <person name="Borchert S."/>
            <person name="Borriss R."/>
            <person name="Boursier L."/>
            <person name="Brans A."/>
            <person name="Braun M."/>
            <person name="Brignell S.C."/>
            <person name="Bron S."/>
            <person name="Brouillet S."/>
            <person name="Bruschi C.V."/>
            <person name="Caldwell B."/>
            <person name="Capuano V."/>
            <person name="Carter N.M."/>
            <person name="Choi S.-K."/>
            <person name="Codani J.-J."/>
            <person name="Connerton I.F."/>
            <person name="Cummings N.J."/>
            <person name="Daniel R.A."/>
            <person name="Denizot F."/>
            <person name="Devine K.M."/>
            <person name="Duesterhoeft A."/>
            <person name="Ehrlich S.D."/>
            <person name="Emmerson P.T."/>
            <person name="Entian K.-D."/>
            <person name="Errington J."/>
            <person name="Fabret C."/>
            <person name="Ferrari E."/>
            <person name="Foulger D."/>
            <person name="Fritz C."/>
            <person name="Fujita M."/>
            <person name="Fujita Y."/>
            <person name="Fuma S."/>
            <person name="Galizzi A."/>
            <person name="Galleron N."/>
            <person name="Ghim S.-Y."/>
            <person name="Glaser P."/>
            <person name="Goffeau A."/>
            <person name="Golightly E.J."/>
            <person name="Grandi G."/>
            <person name="Guiseppi G."/>
            <person name="Guy B.J."/>
            <person name="Haga K."/>
            <person name="Haiech J."/>
            <person name="Harwood C.R."/>
            <person name="Henaut A."/>
            <person name="Hilbert H."/>
            <person name="Holsappel S."/>
            <person name="Hosono S."/>
            <person name="Hullo M.-F."/>
            <person name="Itaya M."/>
            <person name="Jones L.-M."/>
            <person name="Joris B."/>
            <person name="Karamata D."/>
            <person name="Kasahara Y."/>
            <person name="Klaerr-Blanchard M."/>
            <person name="Klein C."/>
            <person name="Kobayashi Y."/>
            <person name="Koetter P."/>
            <person name="Koningstein G."/>
            <person name="Krogh S."/>
            <person name="Kumano M."/>
            <person name="Kurita K."/>
            <person name="Lapidus A."/>
            <person name="Lardinois S."/>
            <person name="Lauber J."/>
            <person name="Lazarevic V."/>
            <person name="Lee S.-M."/>
            <person name="Levine A."/>
            <person name="Liu H."/>
            <person name="Masuda S."/>
            <person name="Mauel C."/>
            <person name="Medigue C."/>
            <person name="Medina N."/>
            <person name="Mellado R.P."/>
            <person name="Mizuno M."/>
            <person name="Moestl D."/>
            <person name="Nakai S."/>
            <person name="Noback M."/>
            <person name="Noone D."/>
            <person name="O'Reilly M."/>
            <person name="Ogawa K."/>
            <person name="Ogiwara A."/>
            <person name="Oudega B."/>
            <person name="Park S.-H."/>
            <person name="Parro V."/>
            <person name="Pohl T.M."/>
            <person name="Portetelle D."/>
            <person name="Porwollik S."/>
            <person name="Prescott A.M."/>
            <person name="Presecan E."/>
            <person name="Pujic P."/>
            <person name="Purnelle B."/>
            <person name="Rapoport G."/>
            <person name="Rey M."/>
            <person name="Reynolds S."/>
            <person name="Rieger M."/>
            <person name="Rivolta C."/>
            <person name="Rocha E."/>
            <person name="Roche B."/>
            <person name="Rose M."/>
            <person name="Sadaie Y."/>
            <person name="Sato T."/>
            <person name="Scanlan E."/>
            <person name="Schleich S."/>
            <person name="Schroeter R."/>
            <person name="Scoffone F."/>
            <person name="Sekiguchi J."/>
            <person name="Sekowska A."/>
            <person name="Seror S.J."/>
            <person name="Serror P."/>
            <person name="Shin B.-S."/>
            <person name="Soldo B."/>
            <person name="Sorokin A."/>
            <person name="Tacconi E."/>
            <person name="Takagi T."/>
            <person name="Takahashi H."/>
            <person name="Takemaru K."/>
            <person name="Takeuchi M."/>
            <person name="Tamakoshi A."/>
            <person name="Tanaka T."/>
            <person name="Terpstra P."/>
            <person name="Tognoni A."/>
            <person name="Tosato V."/>
            <person name="Uchiyama S."/>
            <person name="Vandenbol M."/>
            <person name="Vannier F."/>
            <person name="Vassarotti A."/>
            <person name="Viari A."/>
            <person name="Wambutt R."/>
            <person name="Wedler E."/>
            <person name="Wedler H."/>
            <person name="Weitzenegger T."/>
            <person name="Winters P."/>
            <person name="Wipat A."/>
            <person name="Yamamoto H."/>
            <person name="Yamane K."/>
            <person name="Yasumoto K."/>
            <person name="Yata K."/>
            <person name="Yoshida K."/>
            <person name="Yoshikawa H.-F."/>
            <person name="Zumstein E."/>
            <person name="Yoshikawa H."/>
            <person name="Danchin A."/>
        </authorList>
    </citation>
    <scope>NUCLEOTIDE SEQUENCE [LARGE SCALE GENOMIC DNA]</scope>
    <source>
        <strain>168</strain>
    </source>
</reference>
<reference key="3">
    <citation type="journal article" date="2010" name="J. Biol. Chem.">
        <title>Discovery and characterization of HemQ: an essential heme biosynthetic pathway component.</title>
        <authorList>
            <person name="Dailey T.A."/>
            <person name="Boynton T.O."/>
            <person name="Albetel A.N."/>
            <person name="Gerdes S."/>
            <person name="Johnson M.K."/>
            <person name="Dailey H.A."/>
        </authorList>
    </citation>
    <scope>PATHWAY</scope>
</reference>
<reference key="4">
    <citation type="journal article" date="2015" name="Proc. Natl. Acad. Sci. U.S.A.">
        <title>Noncanonical coproporphyrin-dependent bacterial heme biosynthesis pathway that does not use protoporphyrin.</title>
        <authorList>
            <person name="Dailey H.A."/>
            <person name="Gerdes S."/>
            <person name="Dailey T.A."/>
            <person name="Burch J.S."/>
            <person name="Phillips J.D."/>
        </authorList>
    </citation>
    <scope>FUNCTION</scope>
    <scope>PATHWAY</scope>
</reference>
<reference key="5">
    <citation type="journal article" date="2015" name="Arch. Biochem. Biophys.">
        <title>HemQ: An iron-coproporphyrin oxidative decarboxylase for protoheme synthesis in Firmicutes and Actinobacteria.</title>
        <authorList>
            <person name="Dailey H.A."/>
            <person name="Gerdes S."/>
        </authorList>
    </citation>
    <scope>PATHWAY</scope>
    <scope>REVIEW</scope>
</reference>
<reference key="6">
    <citation type="journal article" date="2017" name="Microbiol. Mol. Biol. Rev.">
        <title>Prokaryotic heme biosynthesis: multiple pathways to a common essential product.</title>
        <authorList>
            <person name="Dailey H.A."/>
            <person name="Dailey T.A."/>
            <person name="Gerdes S."/>
            <person name="Jahn D."/>
            <person name="Jahn M."/>
            <person name="O'Brian M.R."/>
            <person name="Warren M.J."/>
        </authorList>
    </citation>
    <scope>NOMENCLATURE</scope>
    <scope>REVIEW</scope>
</reference>
<accession>P39645</accession>
<comment type="function">
    <text evidence="1 3">Involved in coproporphyrin-dependent heme b biosynthesis (PubMed:25646457). Catalyzes the decarboxylation of Fe-coproporphyrin III (coproheme) to heme b (protoheme IX), the last step of the pathway (By similarity). The reaction occurs in a stepwise manner with a three-propionate harderoheme intermediate (By similarity).</text>
</comment>
<comment type="catalytic activity">
    <reaction evidence="1">
        <text>Fe-coproporphyrin III + 2 H2O2 + 2 H(+) = heme b + 2 CO2 + 4 H2O</text>
        <dbReference type="Rhea" id="RHEA:56516"/>
        <dbReference type="ChEBI" id="CHEBI:15377"/>
        <dbReference type="ChEBI" id="CHEBI:15378"/>
        <dbReference type="ChEBI" id="CHEBI:16240"/>
        <dbReference type="ChEBI" id="CHEBI:16526"/>
        <dbReference type="ChEBI" id="CHEBI:60344"/>
        <dbReference type="ChEBI" id="CHEBI:68438"/>
        <dbReference type="EC" id="1.3.98.5"/>
    </reaction>
    <physiologicalReaction direction="left-to-right" evidence="1">
        <dbReference type="Rhea" id="RHEA:56517"/>
    </physiologicalReaction>
</comment>
<comment type="catalytic activity">
    <reaction evidence="1">
        <text>Fe-coproporphyrin III + H2O2 + H(+) = harderoheme III + CO2 + 2 H2O</text>
        <dbReference type="Rhea" id="RHEA:57940"/>
        <dbReference type="ChEBI" id="CHEBI:15377"/>
        <dbReference type="ChEBI" id="CHEBI:15378"/>
        <dbReference type="ChEBI" id="CHEBI:16240"/>
        <dbReference type="ChEBI" id="CHEBI:16526"/>
        <dbReference type="ChEBI" id="CHEBI:68438"/>
        <dbReference type="ChEBI" id="CHEBI:142463"/>
    </reaction>
    <physiologicalReaction direction="left-to-right" evidence="1">
        <dbReference type="Rhea" id="RHEA:57941"/>
    </physiologicalReaction>
</comment>
<comment type="catalytic activity">
    <reaction evidence="1">
        <text>harderoheme III + H2O2 + H(+) = heme b + CO2 + 2 H2O</text>
        <dbReference type="Rhea" id="RHEA:57944"/>
        <dbReference type="ChEBI" id="CHEBI:15377"/>
        <dbReference type="ChEBI" id="CHEBI:15378"/>
        <dbReference type="ChEBI" id="CHEBI:16240"/>
        <dbReference type="ChEBI" id="CHEBI:16526"/>
        <dbReference type="ChEBI" id="CHEBI:60344"/>
        <dbReference type="ChEBI" id="CHEBI:142463"/>
    </reaction>
    <physiologicalReaction direction="left-to-right" evidence="1">
        <dbReference type="Rhea" id="RHEA:57945"/>
    </physiologicalReaction>
</comment>
<comment type="cofactor">
    <cofactor evidence="1">
        <name>Fe-coproporphyrin III</name>
        <dbReference type="ChEBI" id="CHEBI:68438"/>
    </cofactor>
    <text evidence="1">Fe-coproporphyrin III acts both as a substrate and a redox cofactor.</text>
</comment>
<comment type="pathway">
    <text evidence="1 2 3 9">Porphyrin-containing compound metabolism; protoheme biosynthesis.</text>
</comment>
<comment type="similarity">
    <text evidence="1 8">Belongs to the ChdC family. Type 1 subfamily.</text>
</comment>
<organism>
    <name type="scientific">Bacillus subtilis (strain 168)</name>
    <dbReference type="NCBI Taxonomy" id="224308"/>
    <lineage>
        <taxon>Bacteria</taxon>
        <taxon>Bacillati</taxon>
        <taxon>Bacillota</taxon>
        <taxon>Bacilli</taxon>
        <taxon>Bacillales</taxon>
        <taxon>Bacillaceae</taxon>
        <taxon>Bacillus</taxon>
    </lineage>
</organism>
<sequence>MSEQQMTNEAAKTLDGWYALHDFRTMDWASWKLLSSDERQSIIHEFTGLLEKWGVAQKEGKGSQTLYSIVGQKADFMLMILRPTMEELNQIELEFNKSRLAEFTIPAYSYVSVVELSNYLASGDGDPYENPHVRARLYPELPESKYVCFYPMDKRRSGNDNWYMLSMEERRNLMRSHGLIGRSYAGKVKQIITGSVGFDDYEWGVTLFSDDVLQFKKLVYEMRFDEVSARYGEFGSFFVGNHLSLDTLPQFLYV</sequence>
<gene>
    <name evidence="1 7" type="primary">chdC</name>
    <name evidence="4" type="synonym">hemQ</name>
    <name type="synonym">ywfI</name>
    <name type="ordered locus">BSU37670</name>
    <name type="ORF">ipa-87r</name>
</gene>
<proteinExistence type="inferred from homology"/>
<protein>
    <recommendedName>
        <fullName evidence="1 5">Coproheme decarboxylase</fullName>
        <ecNumber evidence="1">1.3.98.5</ecNumber>
    </recommendedName>
    <alternativeName>
        <fullName evidence="1 8">Coproheme III oxidative decarboxylase</fullName>
    </alternativeName>
    <alternativeName>
        <fullName evidence="1 8">Hydrogen peroxide-dependent heme synthase</fullName>
    </alternativeName>
    <alternativeName>
        <fullName evidence="6">Iron-coproporphyrin oxidative decarboxylase</fullName>
    </alternativeName>
</protein>
<dbReference type="EC" id="1.3.98.5" evidence="1"/>
<dbReference type="EMBL" id="X73124">
    <property type="protein sequence ID" value="CAA51643.1"/>
    <property type="molecule type" value="Genomic_DNA"/>
</dbReference>
<dbReference type="EMBL" id="AL009126">
    <property type="protein sequence ID" value="CAB15794.1"/>
    <property type="molecule type" value="Genomic_DNA"/>
</dbReference>
<dbReference type="PIR" id="S39742">
    <property type="entry name" value="S39742"/>
</dbReference>
<dbReference type="RefSeq" id="NP_391647.2">
    <property type="nucleotide sequence ID" value="NC_000964.3"/>
</dbReference>
<dbReference type="RefSeq" id="WP_003242896.1">
    <property type="nucleotide sequence ID" value="NZ_OZ025638.1"/>
</dbReference>
<dbReference type="SMR" id="P39645"/>
<dbReference type="FunCoup" id="P39645">
    <property type="interactions" value="162"/>
</dbReference>
<dbReference type="STRING" id="224308.BSU37670"/>
<dbReference type="jPOST" id="P39645"/>
<dbReference type="PaxDb" id="224308-BSU37670"/>
<dbReference type="EnsemblBacteria" id="CAB15794">
    <property type="protein sequence ID" value="CAB15794"/>
    <property type="gene ID" value="BSU_37670"/>
</dbReference>
<dbReference type="GeneID" id="936512"/>
<dbReference type="KEGG" id="bsu:BSU37670"/>
<dbReference type="PATRIC" id="fig|224308.179.peg.4079"/>
<dbReference type="eggNOG" id="COG3253">
    <property type="taxonomic scope" value="Bacteria"/>
</dbReference>
<dbReference type="InParanoid" id="P39645"/>
<dbReference type="OrthoDB" id="9773646at2"/>
<dbReference type="BioCyc" id="BSUB:BSU37670-MONOMER"/>
<dbReference type="BioCyc" id="MetaCyc:BSU37670-MONOMER"/>
<dbReference type="UniPathway" id="UPA00252"/>
<dbReference type="Proteomes" id="UP000001570">
    <property type="component" value="Chromosome"/>
</dbReference>
<dbReference type="GO" id="GO:0020037">
    <property type="term" value="F:heme binding"/>
    <property type="evidence" value="ECO:0007669"/>
    <property type="project" value="InterPro"/>
</dbReference>
<dbReference type="GO" id="GO:0046872">
    <property type="term" value="F:metal ion binding"/>
    <property type="evidence" value="ECO:0007669"/>
    <property type="project" value="UniProtKB-KW"/>
</dbReference>
<dbReference type="GO" id="GO:0016634">
    <property type="term" value="F:oxidoreductase activity, acting on the CH-CH group of donors, oxygen as acceptor"/>
    <property type="evidence" value="ECO:0007669"/>
    <property type="project" value="UniProtKB-UniRule"/>
</dbReference>
<dbReference type="GO" id="GO:0004601">
    <property type="term" value="F:peroxidase activity"/>
    <property type="evidence" value="ECO:0007669"/>
    <property type="project" value="InterPro"/>
</dbReference>
<dbReference type="GO" id="GO:0006785">
    <property type="term" value="P:heme B biosynthetic process"/>
    <property type="evidence" value="ECO:0007669"/>
    <property type="project" value="UniProtKB-UniRule"/>
</dbReference>
<dbReference type="Gene3D" id="3.30.70.1030">
    <property type="entry name" value="Apc35880, domain 1"/>
    <property type="match status" value="2"/>
</dbReference>
<dbReference type="HAMAP" id="MF_01442">
    <property type="entry name" value="Coproheme_decarbox_1"/>
    <property type="match status" value="1"/>
</dbReference>
<dbReference type="InterPro" id="IPR031332">
    <property type="entry name" value="CHDC"/>
</dbReference>
<dbReference type="InterPro" id="IPR010644">
    <property type="entry name" value="ChdC/CLD"/>
</dbReference>
<dbReference type="InterPro" id="IPR011008">
    <property type="entry name" value="Dimeric_a/b-barrel"/>
</dbReference>
<dbReference type="NCBIfam" id="NF008913">
    <property type="entry name" value="PRK12276.1"/>
    <property type="match status" value="1"/>
</dbReference>
<dbReference type="PANTHER" id="PTHR36843:SF1">
    <property type="entry name" value="COPROHEME DECARBOXYLASE"/>
    <property type="match status" value="1"/>
</dbReference>
<dbReference type="PANTHER" id="PTHR36843">
    <property type="entry name" value="HEME-DEPENDENT PEROXIDASE YWFI-RELATED"/>
    <property type="match status" value="1"/>
</dbReference>
<dbReference type="Pfam" id="PF06778">
    <property type="entry name" value="Chlor_dismutase"/>
    <property type="match status" value="1"/>
</dbReference>
<dbReference type="SUPFAM" id="SSF54909">
    <property type="entry name" value="Dimeric alpha+beta barrel"/>
    <property type="match status" value="1"/>
</dbReference>
<name>CHDC_BACSU</name>
<feature type="chain" id="PRO_0000049971" description="Coproheme decarboxylase">
    <location>
        <begin position="1"/>
        <end position="254"/>
    </location>
</feature>
<feature type="active site" evidence="1">
    <location>
        <position position="150"/>
    </location>
</feature>
<feature type="binding site" evidence="1">
    <location>
        <position position="136"/>
    </location>
    <ligand>
        <name>Fe-coproporphyrin III</name>
        <dbReference type="ChEBI" id="CHEBI:68438"/>
    </ligand>
</feature>
<feature type="binding site" evidence="1">
    <location>
        <begin position="150"/>
        <end position="154"/>
    </location>
    <ligand>
        <name>Fe-coproporphyrin III</name>
        <dbReference type="ChEBI" id="CHEBI:68438"/>
    </ligand>
</feature>
<feature type="binding site" description="axial binding residue" evidence="1">
    <location>
        <position position="177"/>
    </location>
    <ligand>
        <name>Fe-coproporphyrin III</name>
        <dbReference type="ChEBI" id="CHEBI:68438"/>
    </ligand>
    <ligandPart>
        <name>Fe</name>
        <dbReference type="ChEBI" id="CHEBI:18248"/>
    </ligandPart>
</feature>
<feature type="binding site" evidence="1">
    <location>
        <position position="190"/>
    </location>
    <ligand>
        <name>Fe-coproporphyrin III</name>
        <dbReference type="ChEBI" id="CHEBI:68438"/>
    </ligand>
</feature>
<feature type="binding site" evidence="1">
    <location>
        <position position="228"/>
    </location>
    <ligand>
        <name>Fe-coproporphyrin III</name>
        <dbReference type="ChEBI" id="CHEBI:68438"/>
    </ligand>
</feature>
<keyword id="KW-0349">Heme</keyword>
<keyword id="KW-0350">Heme biosynthesis</keyword>
<keyword id="KW-0408">Iron</keyword>
<keyword id="KW-0479">Metal-binding</keyword>
<keyword id="KW-0560">Oxidoreductase</keyword>
<keyword id="KW-1185">Reference proteome</keyword>